<reference key="1">
    <citation type="journal article" date="1996" name="Gene">
        <title>A new Saccharomyces cerevisiae ankyrin repeat-encoding gene required for a normal rate of cell proliferation.</title>
        <authorList>
            <person name="Lycan D.E."/>
            <person name="Stafford K.A."/>
            <person name="Bollinger W."/>
            <person name="Breeden L.L."/>
        </authorList>
    </citation>
    <scope>NUCLEOTIDE SEQUENCE [GENOMIC DNA]</scope>
    <source>
        <strain>ATCC 96902 / S288c / TD28</strain>
    </source>
</reference>
<reference key="2">
    <citation type="journal article" date="1997" name="Nature">
        <title>The nucleotide sequence of Saccharomyces cerevisiae chromosome XVI.</title>
        <authorList>
            <person name="Bussey H."/>
            <person name="Storms R.K."/>
            <person name="Ahmed A."/>
            <person name="Albermann K."/>
            <person name="Allen E."/>
            <person name="Ansorge W."/>
            <person name="Araujo R."/>
            <person name="Aparicio A."/>
            <person name="Barrell B.G."/>
            <person name="Badcock K."/>
            <person name="Benes V."/>
            <person name="Botstein D."/>
            <person name="Bowman S."/>
            <person name="Brueckner M."/>
            <person name="Carpenter J."/>
            <person name="Cherry J.M."/>
            <person name="Chung E."/>
            <person name="Churcher C.M."/>
            <person name="Coster F."/>
            <person name="Davis K."/>
            <person name="Davis R.W."/>
            <person name="Dietrich F.S."/>
            <person name="Delius H."/>
            <person name="DiPaolo T."/>
            <person name="Dubois E."/>
            <person name="Duesterhoeft A."/>
            <person name="Duncan M."/>
            <person name="Floeth M."/>
            <person name="Fortin N."/>
            <person name="Friesen J.D."/>
            <person name="Fritz C."/>
            <person name="Goffeau A."/>
            <person name="Hall J."/>
            <person name="Hebling U."/>
            <person name="Heumann K."/>
            <person name="Hilbert H."/>
            <person name="Hillier L.W."/>
            <person name="Hunicke-Smith S."/>
            <person name="Hyman R.W."/>
            <person name="Johnston M."/>
            <person name="Kalman S."/>
            <person name="Kleine K."/>
            <person name="Komp C."/>
            <person name="Kurdi O."/>
            <person name="Lashkari D."/>
            <person name="Lew H."/>
            <person name="Lin A."/>
            <person name="Lin D."/>
            <person name="Louis E.J."/>
            <person name="Marathe R."/>
            <person name="Messenguy F."/>
            <person name="Mewes H.-W."/>
            <person name="Mirtipati S."/>
            <person name="Moestl D."/>
            <person name="Mueller-Auer S."/>
            <person name="Namath A."/>
            <person name="Nentwich U."/>
            <person name="Oefner P."/>
            <person name="Pearson D."/>
            <person name="Petel F.X."/>
            <person name="Pohl T.M."/>
            <person name="Purnelle B."/>
            <person name="Rajandream M.A."/>
            <person name="Rechmann S."/>
            <person name="Rieger M."/>
            <person name="Riles L."/>
            <person name="Roberts D."/>
            <person name="Schaefer M."/>
            <person name="Scharfe M."/>
            <person name="Scherens B."/>
            <person name="Schramm S."/>
            <person name="Schroeder M."/>
            <person name="Sdicu A.-M."/>
            <person name="Tettelin H."/>
            <person name="Urrestarazu L.A."/>
            <person name="Ushinsky S."/>
            <person name="Vierendeels F."/>
            <person name="Vissers S."/>
            <person name="Voss H."/>
            <person name="Walsh S.V."/>
            <person name="Wambutt R."/>
            <person name="Wang Y."/>
            <person name="Wedler E."/>
            <person name="Wedler H."/>
            <person name="Winnett E."/>
            <person name="Zhong W.-W."/>
            <person name="Zollner A."/>
            <person name="Vo D.H."/>
            <person name="Hani J."/>
        </authorList>
    </citation>
    <scope>NUCLEOTIDE SEQUENCE [LARGE SCALE GENOMIC DNA]</scope>
    <source>
        <strain>ATCC 204508 / S288c</strain>
    </source>
</reference>
<reference key="3">
    <citation type="journal article" date="2014" name="G3 (Bethesda)">
        <title>The reference genome sequence of Saccharomyces cerevisiae: Then and now.</title>
        <authorList>
            <person name="Engel S.R."/>
            <person name="Dietrich F.S."/>
            <person name="Fisk D.G."/>
            <person name="Binkley G."/>
            <person name="Balakrishnan R."/>
            <person name="Costanzo M.C."/>
            <person name="Dwight S.S."/>
            <person name="Hitz B.C."/>
            <person name="Karra K."/>
            <person name="Nash R.S."/>
            <person name="Weng S."/>
            <person name="Wong E.D."/>
            <person name="Lloyd P."/>
            <person name="Skrzypek M.S."/>
            <person name="Miyasato S.R."/>
            <person name="Simison M."/>
            <person name="Cherry J.M."/>
        </authorList>
    </citation>
    <scope>GENOME REANNOTATION</scope>
    <source>
        <strain>ATCC 204508 / S288c</strain>
    </source>
</reference>
<reference key="4">
    <citation type="journal article" date="2007" name="Genome Res.">
        <title>Approaching a complete repository of sequence-verified protein-encoding clones for Saccharomyces cerevisiae.</title>
        <authorList>
            <person name="Hu Y."/>
            <person name="Rolfs A."/>
            <person name="Bhullar B."/>
            <person name="Murthy T.V.S."/>
            <person name="Zhu C."/>
            <person name="Berger M.F."/>
            <person name="Camargo A.A."/>
            <person name="Kelley F."/>
            <person name="McCarron S."/>
            <person name="Jepson D."/>
            <person name="Richardson A."/>
            <person name="Raphael J."/>
            <person name="Moreira D."/>
            <person name="Taycher E."/>
            <person name="Zuo D."/>
            <person name="Mohr S."/>
            <person name="Kane M.F."/>
            <person name="Williamson J."/>
            <person name="Simpson A.J.G."/>
            <person name="Bulyk M.L."/>
            <person name="Harlow E."/>
            <person name="Marsischky G."/>
            <person name="Kolodner R.D."/>
            <person name="LaBaer J."/>
        </authorList>
    </citation>
    <scope>NUCLEOTIDE SEQUENCE [GENOMIC DNA]</scope>
    <source>
        <strain>ATCC 204508 / S288c</strain>
    </source>
</reference>
<reference key="5">
    <citation type="journal article" date="1988" name="Cell">
        <title>Mutations at a Zn(II) finger motif in the yeast eIF-2 beta gene alter ribosomal start-site selection during the scanning process.</title>
        <authorList>
            <person name="Donahue T.F."/>
            <person name="Cigan A.M."/>
            <person name="Pabich E.K."/>
            <person name="Valavicius B.C."/>
        </authorList>
    </citation>
    <scope>NUCLEOTIDE SEQUENCE [GENOMIC DNA] OF 84-200</scope>
</reference>
<reference key="6">
    <citation type="journal article" date="2003" name="Nature">
        <title>Global analysis of protein expression in yeast.</title>
        <authorList>
            <person name="Ghaemmaghami S."/>
            <person name="Huh W.-K."/>
            <person name="Bower K."/>
            <person name="Howson R.W."/>
            <person name="Belle A."/>
            <person name="Dephoure N."/>
            <person name="O'Shea E.K."/>
            <person name="Weissman J.S."/>
        </authorList>
    </citation>
    <scope>LEVEL OF PROTEIN EXPRESSION [LARGE SCALE ANALYSIS]</scope>
</reference>
<reference key="7">
    <citation type="journal article" date="2007" name="J. Proteome Res.">
        <title>Large-scale phosphorylation analysis of alpha-factor-arrested Saccharomyces cerevisiae.</title>
        <authorList>
            <person name="Li X."/>
            <person name="Gerber S.A."/>
            <person name="Rudner A.D."/>
            <person name="Beausoleil S.A."/>
            <person name="Haas W."/>
            <person name="Villen J."/>
            <person name="Elias J.E."/>
            <person name="Gygi S.P."/>
        </authorList>
    </citation>
    <scope>PHOSPHORYLATION [LARGE SCALE ANALYSIS] AT SER-78</scope>
    <scope>IDENTIFICATION BY MASS SPECTROMETRY [LARGE SCALE ANALYSIS]</scope>
    <source>
        <strain>ADR376</strain>
    </source>
</reference>
<reference key="8">
    <citation type="journal article" date="2012" name="Proc. Natl. Acad. Sci. U.S.A.">
        <title>N-terminal acetylome analyses and functional insights of the N-terminal acetyltransferase NatB.</title>
        <authorList>
            <person name="Van Damme P."/>
            <person name="Lasa M."/>
            <person name="Polevoda B."/>
            <person name="Gazquez C."/>
            <person name="Elosegui-Artola A."/>
            <person name="Kim D.S."/>
            <person name="De Juan-Pardo E."/>
            <person name="Demeyer K."/>
            <person name="Hole K."/>
            <person name="Larrea E."/>
            <person name="Timmerman E."/>
            <person name="Prieto J."/>
            <person name="Arnesen T."/>
            <person name="Sherman F."/>
            <person name="Gevaert K."/>
            <person name="Aldabe R."/>
        </authorList>
    </citation>
    <scope>IDENTIFICATION BY MASS SPECTROMETRY [LARGE SCALE ANALYSIS]</scope>
</reference>
<evidence type="ECO:0000256" key="1">
    <source>
        <dbReference type="SAM" id="MobiDB-lite"/>
    </source>
</evidence>
<evidence type="ECO:0000269" key="2">
    <source>
    </source>
</evidence>
<evidence type="ECO:0000305" key="3"/>
<evidence type="ECO:0007744" key="4">
    <source>
    </source>
</evidence>
<evidence type="ECO:0007829" key="5">
    <source>
        <dbReference type="PDB" id="4BSZ"/>
    </source>
</evidence>
<gene>
    <name type="primary">YAR1</name>
    <name type="ordered locus">YPL239W</name>
</gene>
<comment type="function">
    <text>Required for normal rate of cell proliferation.</text>
</comment>
<comment type="interaction">
    <interactant intactId="EBI-20829">
        <id>P46683</id>
    </interactant>
    <interactant intactId="EBI-16140">
        <id>P05750</id>
        <label>RPS3</label>
    </interactant>
    <organismsDiffer>false</organismsDiffer>
    <experiments>3</experiments>
</comment>
<comment type="miscellaneous">
    <text evidence="2">Present with 13100 molecules/cell in log phase SD medium.</text>
</comment>
<protein>
    <recommendedName>
        <fullName>Ankyrin repeat-containing protein YAR1</fullName>
    </recommendedName>
</protein>
<dbReference type="EMBL" id="U34385">
    <property type="protein sequence ID" value="AAB60315.1"/>
    <property type="molecule type" value="Genomic_DNA"/>
</dbReference>
<dbReference type="EMBL" id="Z67751">
    <property type="protein sequence ID" value="CAA91605.1"/>
    <property type="molecule type" value="Genomic_DNA"/>
</dbReference>
<dbReference type="EMBL" id="Z73595">
    <property type="protein sequence ID" value="CAA97960.1"/>
    <property type="molecule type" value="Genomic_DNA"/>
</dbReference>
<dbReference type="EMBL" id="AY558138">
    <property type="protein sequence ID" value="AAS56464.1"/>
    <property type="molecule type" value="Genomic_DNA"/>
</dbReference>
<dbReference type="EMBL" id="M21813">
    <property type="status" value="NOT_ANNOTATED_CDS"/>
    <property type="molecule type" value="Genomic_DNA"/>
</dbReference>
<dbReference type="EMBL" id="BK006949">
    <property type="protein sequence ID" value="DAA11198.1"/>
    <property type="molecule type" value="Genomic_DNA"/>
</dbReference>
<dbReference type="PIR" id="S61025">
    <property type="entry name" value="S61025"/>
</dbReference>
<dbReference type="RefSeq" id="NP_015085.1">
    <property type="nucleotide sequence ID" value="NM_001184053.1"/>
</dbReference>
<dbReference type="PDB" id="4BSZ">
    <property type="method" value="X-ray"/>
    <property type="resolution" value="2.84 A"/>
    <property type="chains" value="B=1-200"/>
</dbReference>
<dbReference type="PDBsum" id="4BSZ"/>
<dbReference type="SMR" id="P46683"/>
<dbReference type="BioGRID" id="35924">
    <property type="interactions" value="257"/>
</dbReference>
<dbReference type="FunCoup" id="P46683">
    <property type="interactions" value="87"/>
</dbReference>
<dbReference type="IntAct" id="P46683">
    <property type="interactions" value="4"/>
</dbReference>
<dbReference type="MINT" id="P46683"/>
<dbReference type="STRING" id="4932.YPL239W"/>
<dbReference type="iPTMnet" id="P46683"/>
<dbReference type="PaxDb" id="4932-YPL239W"/>
<dbReference type="PeptideAtlas" id="P46683"/>
<dbReference type="EnsemblFungi" id="YPL239W_mRNA">
    <property type="protein sequence ID" value="YPL239W"/>
    <property type="gene ID" value="YPL239W"/>
</dbReference>
<dbReference type="GeneID" id="855837"/>
<dbReference type="KEGG" id="sce:YPL239W"/>
<dbReference type="AGR" id="SGD:S000006160"/>
<dbReference type="SGD" id="S000006160">
    <property type="gene designation" value="YAR1"/>
</dbReference>
<dbReference type="VEuPathDB" id="FungiDB:YPL239W"/>
<dbReference type="eggNOG" id="KOG0504">
    <property type="taxonomic scope" value="Eukaryota"/>
</dbReference>
<dbReference type="HOGENOM" id="CLU_000134_20_0_1"/>
<dbReference type="InParanoid" id="P46683"/>
<dbReference type="OMA" id="EAENVGW"/>
<dbReference type="OrthoDB" id="10057496at2759"/>
<dbReference type="BioCyc" id="YEAST:G3O-34125-MONOMER"/>
<dbReference type="BioGRID-ORCS" id="855837">
    <property type="hits" value="2 hits in 10 CRISPR screens"/>
</dbReference>
<dbReference type="EvolutionaryTrace" id="P46683"/>
<dbReference type="PRO" id="PR:P46683"/>
<dbReference type="Proteomes" id="UP000002311">
    <property type="component" value="Chromosome XVI"/>
</dbReference>
<dbReference type="RNAct" id="P46683">
    <property type="molecule type" value="protein"/>
</dbReference>
<dbReference type="GO" id="GO:0005737">
    <property type="term" value="C:cytoplasm"/>
    <property type="evidence" value="ECO:0007005"/>
    <property type="project" value="SGD"/>
</dbReference>
<dbReference type="GO" id="GO:0030907">
    <property type="term" value="C:MBF transcription complex"/>
    <property type="evidence" value="ECO:0000318"/>
    <property type="project" value="GO_Central"/>
</dbReference>
<dbReference type="GO" id="GO:0005634">
    <property type="term" value="C:nucleus"/>
    <property type="evidence" value="ECO:0000314"/>
    <property type="project" value="SGD"/>
</dbReference>
<dbReference type="GO" id="GO:0033309">
    <property type="term" value="C:SBF transcription complex"/>
    <property type="evidence" value="ECO:0000318"/>
    <property type="project" value="GO_Central"/>
</dbReference>
<dbReference type="GO" id="GO:0001228">
    <property type="term" value="F:DNA-binding transcription activator activity, RNA polymerase II-specific"/>
    <property type="evidence" value="ECO:0000318"/>
    <property type="project" value="GO_Central"/>
</dbReference>
<dbReference type="GO" id="GO:0051082">
    <property type="term" value="F:unfolded protein binding"/>
    <property type="evidence" value="ECO:0000314"/>
    <property type="project" value="SGD"/>
</dbReference>
<dbReference type="GO" id="GO:0034599">
    <property type="term" value="P:cellular response to oxidative stress"/>
    <property type="evidence" value="ECO:0000315"/>
    <property type="project" value="SGD"/>
</dbReference>
<dbReference type="GO" id="GO:0045944">
    <property type="term" value="P:positive regulation of transcription by RNA polymerase II"/>
    <property type="evidence" value="ECO:0000318"/>
    <property type="project" value="GO_Central"/>
</dbReference>
<dbReference type="GO" id="GO:0032880">
    <property type="term" value="P:regulation of protein localization"/>
    <property type="evidence" value="ECO:0000315"/>
    <property type="project" value="SGD"/>
</dbReference>
<dbReference type="GO" id="GO:0006970">
    <property type="term" value="P:response to osmotic stress"/>
    <property type="evidence" value="ECO:0000315"/>
    <property type="project" value="SGD"/>
</dbReference>
<dbReference type="GO" id="GO:0042274">
    <property type="term" value="P:ribosomal small subunit biogenesis"/>
    <property type="evidence" value="ECO:0000315"/>
    <property type="project" value="SGD"/>
</dbReference>
<dbReference type="GO" id="GO:0000056">
    <property type="term" value="P:ribosomal small subunit export from nucleus"/>
    <property type="evidence" value="ECO:0000315"/>
    <property type="project" value="SGD"/>
</dbReference>
<dbReference type="FunFam" id="1.25.40.20:FF:000325">
    <property type="entry name" value="Ankyrin repeat-containing protein YAR1"/>
    <property type="match status" value="1"/>
</dbReference>
<dbReference type="Gene3D" id="1.25.40.20">
    <property type="entry name" value="Ankyrin repeat-containing domain"/>
    <property type="match status" value="1"/>
</dbReference>
<dbReference type="InterPro" id="IPR002110">
    <property type="entry name" value="Ankyrin_rpt"/>
</dbReference>
<dbReference type="InterPro" id="IPR036770">
    <property type="entry name" value="Ankyrin_rpt-contain_sf"/>
</dbReference>
<dbReference type="PANTHER" id="PTHR24198">
    <property type="entry name" value="ANKYRIN REPEAT AND PROTEIN KINASE DOMAIN-CONTAINING PROTEIN"/>
    <property type="match status" value="1"/>
</dbReference>
<dbReference type="PANTHER" id="PTHR24198:SF165">
    <property type="entry name" value="ANKYRIN REPEAT-CONTAINING PROTEIN-RELATED"/>
    <property type="match status" value="1"/>
</dbReference>
<dbReference type="Pfam" id="PF12796">
    <property type="entry name" value="Ank_2"/>
    <property type="match status" value="1"/>
</dbReference>
<dbReference type="SMART" id="SM00248">
    <property type="entry name" value="ANK"/>
    <property type="match status" value="2"/>
</dbReference>
<dbReference type="SUPFAM" id="SSF48403">
    <property type="entry name" value="Ankyrin repeat"/>
    <property type="match status" value="1"/>
</dbReference>
<dbReference type="PROSITE" id="PS50297">
    <property type="entry name" value="ANK_REP_REGION"/>
    <property type="match status" value="1"/>
</dbReference>
<dbReference type="PROSITE" id="PS50088">
    <property type="entry name" value="ANK_REPEAT"/>
    <property type="match status" value="2"/>
</dbReference>
<name>YAR1_YEAST</name>
<keyword id="KW-0002">3D-structure</keyword>
<keyword id="KW-0040">ANK repeat</keyword>
<keyword id="KW-0597">Phosphoprotein</keyword>
<keyword id="KW-1185">Reference proteome</keyword>
<keyword id="KW-0677">Repeat</keyword>
<proteinExistence type="evidence at protein level"/>
<sequence length="200" mass="22356">MGLHSEPLDQEDQDTIILDARAGDLDSLKDIFTTLVSPELLSTCKESESDSTALHMAAANGHIETVRYILETVSRANSAEDLKAFVNEVNKTGNTALHWASLNGKLDVVKLLCDEYEADPFIRNKFGHDAIFEAENSGKEEVETYFLKKYDVEPEDDEEDTQTEGKNSVQITKGTEIEQVTKEATEALREETEKLNINKD</sequence>
<accession>P46683</accession>
<accession>D6W3D2</accession>
<feature type="chain" id="PRO_0000067079" description="Ankyrin repeat-containing protein YAR1">
    <location>
        <begin position="1"/>
        <end position="200"/>
    </location>
</feature>
<feature type="repeat" description="ANK 1">
    <location>
        <begin position="49"/>
        <end position="78"/>
    </location>
</feature>
<feature type="repeat" description="ANK 2">
    <location>
        <begin position="92"/>
        <end position="121"/>
    </location>
</feature>
<feature type="region of interest" description="Disordered" evidence="1">
    <location>
        <begin position="152"/>
        <end position="173"/>
    </location>
</feature>
<feature type="compositionally biased region" description="Acidic residues" evidence="1">
    <location>
        <begin position="153"/>
        <end position="162"/>
    </location>
</feature>
<feature type="compositionally biased region" description="Polar residues" evidence="1">
    <location>
        <begin position="164"/>
        <end position="173"/>
    </location>
</feature>
<feature type="modified residue" description="Phosphoserine" evidence="4">
    <location>
        <position position="78"/>
    </location>
</feature>
<feature type="sequence conflict" description="In Ref. 5; no nucleotide entry." evidence="3" ref="5">
    <original>A</original>
    <variation>P</variation>
    <location>
        <position position="118"/>
    </location>
</feature>
<feature type="helix" evidence="5">
    <location>
        <begin position="10"/>
        <end position="22"/>
    </location>
</feature>
<feature type="helix" evidence="5">
    <location>
        <begin position="25"/>
        <end position="34"/>
    </location>
</feature>
<feature type="helix" evidence="5">
    <location>
        <begin position="38"/>
        <end position="43"/>
    </location>
</feature>
<feature type="turn" evidence="5">
    <location>
        <begin position="47"/>
        <end position="49"/>
    </location>
</feature>
<feature type="helix" evidence="5">
    <location>
        <begin position="53"/>
        <end position="59"/>
    </location>
</feature>
<feature type="helix" evidence="5">
    <location>
        <begin position="63"/>
        <end position="76"/>
    </location>
</feature>
<feature type="helix" evidence="5">
    <location>
        <begin position="79"/>
        <end position="86"/>
    </location>
</feature>
<feature type="helix" evidence="5">
    <location>
        <begin position="96"/>
        <end position="102"/>
    </location>
</feature>
<feature type="helix" evidence="5">
    <location>
        <begin position="106"/>
        <end position="114"/>
    </location>
</feature>
<feature type="helix" evidence="5">
    <location>
        <begin position="130"/>
        <end position="136"/>
    </location>
</feature>
<feature type="helix" evidence="5">
    <location>
        <begin position="140"/>
        <end position="149"/>
    </location>
</feature>
<organism>
    <name type="scientific">Saccharomyces cerevisiae (strain ATCC 204508 / S288c)</name>
    <name type="common">Baker's yeast</name>
    <dbReference type="NCBI Taxonomy" id="559292"/>
    <lineage>
        <taxon>Eukaryota</taxon>
        <taxon>Fungi</taxon>
        <taxon>Dikarya</taxon>
        <taxon>Ascomycota</taxon>
        <taxon>Saccharomycotina</taxon>
        <taxon>Saccharomycetes</taxon>
        <taxon>Saccharomycetales</taxon>
        <taxon>Saccharomycetaceae</taxon>
        <taxon>Saccharomyces</taxon>
    </lineage>
</organism>